<gene>
    <name evidence="1" type="primary">rnhB</name>
    <name type="ordered locus">Mboo_1943</name>
</gene>
<keyword id="KW-0963">Cytoplasm</keyword>
<keyword id="KW-0255">Endonuclease</keyword>
<keyword id="KW-0378">Hydrolase</keyword>
<keyword id="KW-0464">Manganese</keyword>
<keyword id="KW-0479">Metal-binding</keyword>
<keyword id="KW-0540">Nuclease</keyword>
<keyword id="KW-1185">Reference proteome</keyword>
<comment type="function">
    <text evidence="1">Endonuclease that specifically degrades the RNA of RNA-DNA hybrids.</text>
</comment>
<comment type="catalytic activity">
    <reaction evidence="1">
        <text>Endonucleolytic cleavage to 5'-phosphomonoester.</text>
        <dbReference type="EC" id="3.1.26.4"/>
    </reaction>
</comment>
<comment type="cofactor">
    <cofactor evidence="1">
        <name>Mn(2+)</name>
        <dbReference type="ChEBI" id="CHEBI:29035"/>
    </cofactor>
    <cofactor evidence="1">
        <name>Mg(2+)</name>
        <dbReference type="ChEBI" id="CHEBI:18420"/>
    </cofactor>
    <text evidence="1">Manganese or magnesium. Binds 1 divalent metal ion per monomer in the absence of substrate. May bind a second metal ion after substrate binding.</text>
</comment>
<comment type="subcellular location">
    <subcellularLocation>
        <location evidence="1">Cytoplasm</location>
    </subcellularLocation>
</comment>
<comment type="similarity">
    <text evidence="1">Belongs to the RNase HII family.</text>
</comment>
<feature type="chain" id="PRO_1000031162" description="Ribonuclease HII">
    <location>
        <begin position="1"/>
        <end position="213"/>
    </location>
</feature>
<feature type="domain" description="RNase H type-2" evidence="2">
    <location>
        <begin position="1"/>
        <end position="206"/>
    </location>
</feature>
<feature type="binding site" evidence="1">
    <location>
        <position position="6"/>
    </location>
    <ligand>
        <name>a divalent metal cation</name>
        <dbReference type="ChEBI" id="CHEBI:60240"/>
    </ligand>
</feature>
<feature type="binding site" evidence="1">
    <location>
        <position position="7"/>
    </location>
    <ligand>
        <name>a divalent metal cation</name>
        <dbReference type="ChEBI" id="CHEBI:60240"/>
    </ligand>
</feature>
<feature type="binding site" evidence="1">
    <location>
        <position position="101"/>
    </location>
    <ligand>
        <name>a divalent metal cation</name>
        <dbReference type="ChEBI" id="CHEBI:60240"/>
    </ligand>
</feature>
<protein>
    <recommendedName>
        <fullName evidence="1">Ribonuclease HII</fullName>
        <shortName evidence="1">RNase HII</shortName>
        <ecNumber evidence="1">3.1.26.4</ecNumber>
    </recommendedName>
</protein>
<proteinExistence type="inferred from homology"/>
<accession>A7I9P7</accession>
<name>RNH2_METB6</name>
<evidence type="ECO:0000255" key="1">
    <source>
        <dbReference type="HAMAP-Rule" id="MF_00052"/>
    </source>
</evidence>
<evidence type="ECO:0000255" key="2">
    <source>
        <dbReference type="PROSITE-ProRule" id="PRU01319"/>
    </source>
</evidence>
<sequence>MICGVDEAGKGSVLGPMVIAGVGVGSTEMIDGFGLRDSKQLSPSERERLFVLIKKKCKVATVVISAAEIDAFRREMTLNTCVARAHAVVIAQLAPEIAYVDACDVNPFRYAETVRGYLSSPCEIVSEHHADSTYPVVSAASIVAKVTRDREIAKLAKKYGQIGSGYPSDPETIAYLNAYIDEHRIPPPIARKSWKTVSTLLAKKTQSSLTSFF</sequence>
<dbReference type="EC" id="3.1.26.4" evidence="1"/>
<dbReference type="EMBL" id="CP000780">
    <property type="protein sequence ID" value="ABS56458.1"/>
    <property type="molecule type" value="Genomic_DNA"/>
</dbReference>
<dbReference type="RefSeq" id="WP_012107513.1">
    <property type="nucleotide sequence ID" value="NC_009712.1"/>
</dbReference>
<dbReference type="SMR" id="A7I9P7"/>
<dbReference type="STRING" id="456442.Mboo_1943"/>
<dbReference type="GeneID" id="5412098"/>
<dbReference type="KEGG" id="mbn:Mboo_1943"/>
<dbReference type="eggNOG" id="arCOG04121">
    <property type="taxonomic scope" value="Archaea"/>
</dbReference>
<dbReference type="HOGENOM" id="CLU_036532_0_4_2"/>
<dbReference type="OrthoDB" id="33866at2157"/>
<dbReference type="Proteomes" id="UP000002408">
    <property type="component" value="Chromosome"/>
</dbReference>
<dbReference type="GO" id="GO:0005737">
    <property type="term" value="C:cytoplasm"/>
    <property type="evidence" value="ECO:0007669"/>
    <property type="project" value="UniProtKB-SubCell"/>
</dbReference>
<dbReference type="GO" id="GO:0032299">
    <property type="term" value="C:ribonuclease H2 complex"/>
    <property type="evidence" value="ECO:0007669"/>
    <property type="project" value="TreeGrafter"/>
</dbReference>
<dbReference type="GO" id="GO:0030145">
    <property type="term" value="F:manganese ion binding"/>
    <property type="evidence" value="ECO:0007669"/>
    <property type="project" value="UniProtKB-UniRule"/>
</dbReference>
<dbReference type="GO" id="GO:0003723">
    <property type="term" value="F:RNA binding"/>
    <property type="evidence" value="ECO:0007669"/>
    <property type="project" value="InterPro"/>
</dbReference>
<dbReference type="GO" id="GO:0004523">
    <property type="term" value="F:RNA-DNA hybrid ribonuclease activity"/>
    <property type="evidence" value="ECO:0007669"/>
    <property type="project" value="UniProtKB-UniRule"/>
</dbReference>
<dbReference type="GO" id="GO:0043137">
    <property type="term" value="P:DNA replication, removal of RNA primer"/>
    <property type="evidence" value="ECO:0007669"/>
    <property type="project" value="TreeGrafter"/>
</dbReference>
<dbReference type="GO" id="GO:0006298">
    <property type="term" value="P:mismatch repair"/>
    <property type="evidence" value="ECO:0007669"/>
    <property type="project" value="TreeGrafter"/>
</dbReference>
<dbReference type="CDD" id="cd07180">
    <property type="entry name" value="RNase_HII_archaea_like"/>
    <property type="match status" value="1"/>
</dbReference>
<dbReference type="FunFam" id="1.10.10.460:FF:000001">
    <property type="entry name" value="Ribonuclease"/>
    <property type="match status" value="1"/>
</dbReference>
<dbReference type="Gene3D" id="3.30.420.10">
    <property type="entry name" value="Ribonuclease H-like superfamily/Ribonuclease H"/>
    <property type="match status" value="1"/>
</dbReference>
<dbReference type="Gene3D" id="1.10.10.460">
    <property type="entry name" value="Ribonuclease hii. Domain 2"/>
    <property type="match status" value="1"/>
</dbReference>
<dbReference type="HAMAP" id="MF_00052_A">
    <property type="entry name" value="RNase_HII_A"/>
    <property type="match status" value="1"/>
</dbReference>
<dbReference type="InterPro" id="IPR004649">
    <property type="entry name" value="RNase_H2_suA"/>
</dbReference>
<dbReference type="InterPro" id="IPR001352">
    <property type="entry name" value="RNase_HII/HIII"/>
</dbReference>
<dbReference type="InterPro" id="IPR024567">
    <property type="entry name" value="RNase_HII/HIII_dom"/>
</dbReference>
<dbReference type="InterPro" id="IPR020787">
    <property type="entry name" value="RNase_HII_arc"/>
</dbReference>
<dbReference type="InterPro" id="IPR023160">
    <property type="entry name" value="RNase_HII_hlx-loop-hlx_cap_dom"/>
</dbReference>
<dbReference type="InterPro" id="IPR012337">
    <property type="entry name" value="RNaseH-like_sf"/>
</dbReference>
<dbReference type="InterPro" id="IPR036397">
    <property type="entry name" value="RNaseH_sf"/>
</dbReference>
<dbReference type="NCBIfam" id="TIGR00729">
    <property type="entry name" value="ribonuclease HII"/>
    <property type="match status" value="1"/>
</dbReference>
<dbReference type="PANTHER" id="PTHR10954:SF23">
    <property type="entry name" value="RIBONUCLEASE"/>
    <property type="match status" value="1"/>
</dbReference>
<dbReference type="PANTHER" id="PTHR10954">
    <property type="entry name" value="RIBONUCLEASE H2 SUBUNIT A"/>
    <property type="match status" value="1"/>
</dbReference>
<dbReference type="Pfam" id="PF01351">
    <property type="entry name" value="RNase_HII"/>
    <property type="match status" value="1"/>
</dbReference>
<dbReference type="SUPFAM" id="SSF53098">
    <property type="entry name" value="Ribonuclease H-like"/>
    <property type="match status" value="1"/>
</dbReference>
<dbReference type="PROSITE" id="PS51975">
    <property type="entry name" value="RNASE_H_2"/>
    <property type="match status" value="1"/>
</dbReference>
<reference key="1">
    <citation type="journal article" date="2015" name="Microbiology">
        <title>Genome of Methanoregula boonei 6A8 reveals adaptations to oligotrophic peatland environments.</title>
        <authorList>
            <person name="Braeuer S."/>
            <person name="Cadillo-Quiroz H."/>
            <person name="Kyrpides N."/>
            <person name="Woyke T."/>
            <person name="Goodwin L."/>
            <person name="Detter C."/>
            <person name="Podell S."/>
            <person name="Yavitt J.B."/>
            <person name="Zinder S.H."/>
        </authorList>
    </citation>
    <scope>NUCLEOTIDE SEQUENCE [LARGE SCALE GENOMIC DNA]</scope>
    <source>
        <strain>DSM 21154 / JCM 14090 / 6A8</strain>
    </source>
</reference>
<organism>
    <name type="scientific">Methanoregula boonei (strain DSM 21154 / JCM 14090 / 6A8)</name>
    <dbReference type="NCBI Taxonomy" id="456442"/>
    <lineage>
        <taxon>Archaea</taxon>
        <taxon>Methanobacteriati</taxon>
        <taxon>Methanobacteriota</taxon>
        <taxon>Stenosarchaea group</taxon>
        <taxon>Methanomicrobia</taxon>
        <taxon>Methanomicrobiales</taxon>
        <taxon>Methanoregulaceae</taxon>
        <taxon>Methanoregula</taxon>
    </lineage>
</organism>